<keyword id="KW-0396">Initiation factor</keyword>
<keyword id="KW-0648">Protein biosynthesis</keyword>
<reference key="1">
    <citation type="submission" date="2007-04" db="EMBL/GenBank/DDBJ databases">
        <title>Complete sequence of Pyrobaculum arsenaticum DSM 13514.</title>
        <authorList>
            <consortium name="US DOE Joint Genome Institute"/>
            <person name="Copeland A."/>
            <person name="Lucas S."/>
            <person name="Lapidus A."/>
            <person name="Barry K."/>
            <person name="Glavina del Rio T."/>
            <person name="Dalin E."/>
            <person name="Tice H."/>
            <person name="Pitluck S."/>
            <person name="Chain P."/>
            <person name="Malfatti S."/>
            <person name="Shin M."/>
            <person name="Vergez L."/>
            <person name="Schmutz J."/>
            <person name="Larimer F."/>
            <person name="Land M."/>
            <person name="Hauser L."/>
            <person name="Kyrpides N."/>
            <person name="Mikhailova N."/>
            <person name="Cozen A.E."/>
            <person name="Fitz-Gibbon S.T."/>
            <person name="House C.H."/>
            <person name="Saltikov C."/>
            <person name="Lowe T.M."/>
            <person name="Richardson P."/>
        </authorList>
    </citation>
    <scope>NUCLEOTIDE SEQUENCE [LARGE SCALE GENOMIC DNA]</scope>
    <source>
        <strain>ATCC 700994 / DSM 13514 / JCM 11321 / PZ6</strain>
    </source>
</reference>
<gene>
    <name evidence="1" type="primary">eif2b</name>
    <name type="ordered locus">Pars_0459</name>
</gene>
<evidence type="ECO:0000255" key="1">
    <source>
        <dbReference type="HAMAP-Rule" id="MF_00232"/>
    </source>
</evidence>
<name>IF2B_PYRAR</name>
<dbReference type="EMBL" id="CP000660">
    <property type="protein sequence ID" value="ABP50057.1"/>
    <property type="molecule type" value="Genomic_DNA"/>
</dbReference>
<dbReference type="SMR" id="A4WI40"/>
<dbReference type="STRING" id="340102.Pars_0459"/>
<dbReference type="KEGG" id="pas:Pars_0459"/>
<dbReference type="HOGENOM" id="CLU_026663_3_1_2"/>
<dbReference type="OrthoDB" id="38099at2157"/>
<dbReference type="PhylomeDB" id="A4WI40"/>
<dbReference type="Proteomes" id="UP000001567">
    <property type="component" value="Chromosome"/>
</dbReference>
<dbReference type="GO" id="GO:0003743">
    <property type="term" value="F:translation initiation factor activity"/>
    <property type="evidence" value="ECO:0007669"/>
    <property type="project" value="UniProtKB-UniRule"/>
</dbReference>
<dbReference type="Gene3D" id="3.30.30.170">
    <property type="match status" value="1"/>
</dbReference>
<dbReference type="HAMAP" id="MF_00232">
    <property type="entry name" value="eIF_2_beta"/>
    <property type="match status" value="1"/>
</dbReference>
<dbReference type="InterPro" id="IPR045196">
    <property type="entry name" value="IF2/IF5"/>
</dbReference>
<dbReference type="InterPro" id="IPR004458">
    <property type="entry name" value="TIF2_bsu_arc"/>
</dbReference>
<dbReference type="InterPro" id="IPR002735">
    <property type="entry name" value="Transl_init_fac_IF2/IF5_dom"/>
</dbReference>
<dbReference type="InterPro" id="IPR016189">
    <property type="entry name" value="Transl_init_fac_IF2/IF5_N"/>
</dbReference>
<dbReference type="InterPro" id="IPR016190">
    <property type="entry name" value="Transl_init_fac_IF2/IF5_Zn-bd"/>
</dbReference>
<dbReference type="NCBIfam" id="NF003067">
    <property type="entry name" value="PRK03988.1"/>
    <property type="match status" value="1"/>
</dbReference>
<dbReference type="PANTHER" id="PTHR23001">
    <property type="entry name" value="EUKARYOTIC TRANSLATION INITIATION FACTOR"/>
    <property type="match status" value="1"/>
</dbReference>
<dbReference type="PANTHER" id="PTHR23001:SF3">
    <property type="entry name" value="EUKARYOTIC TRANSLATION INITIATION FACTOR 2 SUBUNIT 2"/>
    <property type="match status" value="1"/>
</dbReference>
<dbReference type="Pfam" id="PF01873">
    <property type="entry name" value="eIF-5_eIF-2B"/>
    <property type="match status" value="1"/>
</dbReference>
<dbReference type="SMART" id="SM00653">
    <property type="entry name" value="eIF2B_5"/>
    <property type="match status" value="1"/>
</dbReference>
<dbReference type="SUPFAM" id="SSF100966">
    <property type="entry name" value="Translation initiation factor 2 beta, aIF2beta, N-terminal domain"/>
    <property type="match status" value="1"/>
</dbReference>
<dbReference type="SUPFAM" id="SSF75689">
    <property type="entry name" value="Zinc-binding domain of translation initiation factor 2 beta"/>
    <property type="match status" value="1"/>
</dbReference>
<organism>
    <name type="scientific">Pyrobaculum arsenaticum (strain DSM 13514 / JCM 11321 / PZ6)</name>
    <dbReference type="NCBI Taxonomy" id="340102"/>
    <lineage>
        <taxon>Archaea</taxon>
        <taxon>Thermoproteota</taxon>
        <taxon>Thermoprotei</taxon>
        <taxon>Thermoproteales</taxon>
        <taxon>Thermoproteaceae</taxon>
        <taxon>Pyrobaculum</taxon>
    </lineage>
</organism>
<accession>A4WI40</accession>
<sequence>MDKEYLALLERAYTLVAPKAQRRTEIPKIQVENMPRKTIIPNFGAIAKRLNRDIYFMAKFFQKELAVPGTVEGDVFTLHGEKSPKVVEAVYERFIRYYVVCPVCNSIDTELRKEGRVFVMKCLACGASTPVKPL</sequence>
<comment type="function">
    <text evidence="1">eIF-2 functions in the early steps of protein synthesis by forming a ternary complex with GTP and initiator tRNA.</text>
</comment>
<comment type="subunit">
    <text evidence="1">Heterotrimer composed of an alpha, a beta and a gamma chain.</text>
</comment>
<comment type="similarity">
    <text evidence="1">Belongs to the eIF-2-beta/eIF-5 family.</text>
</comment>
<protein>
    <recommendedName>
        <fullName evidence="1">Translation initiation factor 2 subunit beta</fullName>
    </recommendedName>
    <alternativeName>
        <fullName evidence="1">aIF2-beta</fullName>
    </alternativeName>
    <alternativeName>
        <fullName evidence="1">eIF-2-beta</fullName>
    </alternativeName>
</protein>
<feature type="chain" id="PRO_1000021657" description="Translation initiation factor 2 subunit beta">
    <location>
        <begin position="1"/>
        <end position="134"/>
    </location>
</feature>
<proteinExistence type="inferred from homology"/>